<proteinExistence type="inferred from homology"/>
<dbReference type="EC" id="3.6.4.-" evidence="1"/>
<dbReference type="EMBL" id="CP000746">
    <property type="protein sequence ID" value="ABR75150.1"/>
    <property type="molecule type" value="Genomic_DNA"/>
</dbReference>
<dbReference type="RefSeq" id="WP_012073527.1">
    <property type="nucleotide sequence ID" value="NC_009655.1"/>
</dbReference>
<dbReference type="SMR" id="A6VQA3"/>
<dbReference type="STRING" id="339671.Asuc_1799"/>
<dbReference type="KEGG" id="asu:Asuc_1799"/>
<dbReference type="eggNOG" id="COG2255">
    <property type="taxonomic scope" value="Bacteria"/>
</dbReference>
<dbReference type="HOGENOM" id="CLU_055599_1_0_6"/>
<dbReference type="OrthoDB" id="9804478at2"/>
<dbReference type="Proteomes" id="UP000001114">
    <property type="component" value="Chromosome"/>
</dbReference>
<dbReference type="GO" id="GO:0005737">
    <property type="term" value="C:cytoplasm"/>
    <property type="evidence" value="ECO:0007669"/>
    <property type="project" value="UniProtKB-SubCell"/>
</dbReference>
<dbReference type="GO" id="GO:0048476">
    <property type="term" value="C:Holliday junction resolvase complex"/>
    <property type="evidence" value="ECO:0007669"/>
    <property type="project" value="UniProtKB-UniRule"/>
</dbReference>
<dbReference type="GO" id="GO:0005524">
    <property type="term" value="F:ATP binding"/>
    <property type="evidence" value="ECO:0007669"/>
    <property type="project" value="UniProtKB-UniRule"/>
</dbReference>
<dbReference type="GO" id="GO:0016887">
    <property type="term" value="F:ATP hydrolysis activity"/>
    <property type="evidence" value="ECO:0007669"/>
    <property type="project" value="InterPro"/>
</dbReference>
<dbReference type="GO" id="GO:0000400">
    <property type="term" value="F:four-way junction DNA binding"/>
    <property type="evidence" value="ECO:0007669"/>
    <property type="project" value="UniProtKB-UniRule"/>
</dbReference>
<dbReference type="GO" id="GO:0009378">
    <property type="term" value="F:four-way junction helicase activity"/>
    <property type="evidence" value="ECO:0007669"/>
    <property type="project" value="InterPro"/>
</dbReference>
<dbReference type="GO" id="GO:0006310">
    <property type="term" value="P:DNA recombination"/>
    <property type="evidence" value="ECO:0007669"/>
    <property type="project" value="UniProtKB-UniRule"/>
</dbReference>
<dbReference type="GO" id="GO:0006281">
    <property type="term" value="P:DNA repair"/>
    <property type="evidence" value="ECO:0007669"/>
    <property type="project" value="UniProtKB-UniRule"/>
</dbReference>
<dbReference type="CDD" id="cd00009">
    <property type="entry name" value="AAA"/>
    <property type="match status" value="1"/>
</dbReference>
<dbReference type="FunFam" id="1.10.10.10:FF:000086">
    <property type="entry name" value="Holliday junction ATP-dependent DNA helicase RuvB"/>
    <property type="match status" value="1"/>
</dbReference>
<dbReference type="FunFam" id="1.10.8.60:FF:000023">
    <property type="entry name" value="Holliday junction ATP-dependent DNA helicase RuvB"/>
    <property type="match status" value="1"/>
</dbReference>
<dbReference type="FunFam" id="3.40.50.300:FF:000073">
    <property type="entry name" value="Holliday junction ATP-dependent DNA helicase RuvB"/>
    <property type="match status" value="1"/>
</dbReference>
<dbReference type="Gene3D" id="1.10.8.60">
    <property type="match status" value="1"/>
</dbReference>
<dbReference type="Gene3D" id="3.40.50.300">
    <property type="entry name" value="P-loop containing nucleotide triphosphate hydrolases"/>
    <property type="match status" value="1"/>
</dbReference>
<dbReference type="Gene3D" id="1.10.10.10">
    <property type="entry name" value="Winged helix-like DNA-binding domain superfamily/Winged helix DNA-binding domain"/>
    <property type="match status" value="1"/>
</dbReference>
<dbReference type="HAMAP" id="MF_00016">
    <property type="entry name" value="DNA_HJ_migration_RuvB"/>
    <property type="match status" value="1"/>
</dbReference>
<dbReference type="InterPro" id="IPR003593">
    <property type="entry name" value="AAA+_ATPase"/>
</dbReference>
<dbReference type="InterPro" id="IPR041445">
    <property type="entry name" value="AAA_lid_4"/>
</dbReference>
<dbReference type="InterPro" id="IPR004605">
    <property type="entry name" value="DNA_helicase_Holl-junc_RuvB"/>
</dbReference>
<dbReference type="InterPro" id="IPR027417">
    <property type="entry name" value="P-loop_NTPase"/>
</dbReference>
<dbReference type="InterPro" id="IPR008824">
    <property type="entry name" value="RuvB-like_N"/>
</dbReference>
<dbReference type="InterPro" id="IPR008823">
    <property type="entry name" value="RuvB_C"/>
</dbReference>
<dbReference type="InterPro" id="IPR036388">
    <property type="entry name" value="WH-like_DNA-bd_sf"/>
</dbReference>
<dbReference type="InterPro" id="IPR036390">
    <property type="entry name" value="WH_DNA-bd_sf"/>
</dbReference>
<dbReference type="NCBIfam" id="NF000868">
    <property type="entry name" value="PRK00080.1"/>
    <property type="match status" value="1"/>
</dbReference>
<dbReference type="NCBIfam" id="TIGR00635">
    <property type="entry name" value="ruvB"/>
    <property type="match status" value="1"/>
</dbReference>
<dbReference type="PANTHER" id="PTHR42848">
    <property type="match status" value="1"/>
</dbReference>
<dbReference type="PANTHER" id="PTHR42848:SF1">
    <property type="entry name" value="HOLLIDAY JUNCTION BRANCH MIGRATION COMPLEX SUBUNIT RUVB"/>
    <property type="match status" value="1"/>
</dbReference>
<dbReference type="Pfam" id="PF17864">
    <property type="entry name" value="AAA_lid_4"/>
    <property type="match status" value="1"/>
</dbReference>
<dbReference type="Pfam" id="PF05491">
    <property type="entry name" value="RuvB_C"/>
    <property type="match status" value="1"/>
</dbReference>
<dbReference type="Pfam" id="PF05496">
    <property type="entry name" value="RuvB_N"/>
    <property type="match status" value="1"/>
</dbReference>
<dbReference type="SMART" id="SM00382">
    <property type="entry name" value="AAA"/>
    <property type="match status" value="1"/>
</dbReference>
<dbReference type="SUPFAM" id="SSF52540">
    <property type="entry name" value="P-loop containing nucleoside triphosphate hydrolases"/>
    <property type="match status" value="1"/>
</dbReference>
<dbReference type="SUPFAM" id="SSF46785">
    <property type="entry name" value="Winged helix' DNA-binding domain"/>
    <property type="match status" value="1"/>
</dbReference>
<accession>A6VQA3</accession>
<keyword id="KW-0067">ATP-binding</keyword>
<keyword id="KW-0963">Cytoplasm</keyword>
<keyword id="KW-0227">DNA damage</keyword>
<keyword id="KW-0233">DNA recombination</keyword>
<keyword id="KW-0234">DNA repair</keyword>
<keyword id="KW-0238">DNA-binding</keyword>
<keyword id="KW-0378">Hydrolase</keyword>
<keyword id="KW-0547">Nucleotide-binding</keyword>
<keyword id="KW-1185">Reference proteome</keyword>
<name>RUVB_ACTSZ</name>
<sequence>MIEADRIISAIAKSDDEAVDRAIRPKLLQDYVGQPQVRSQMEIFIQAAKLRQDALDHLLIFGPPGLGKTTLANIVANEMGVNIRTTSGPVLEKAGDLAAMLTNLEPHDVLFIDEIHRLSPAIEEVLYPAMEDYQLDIMIGEGPAARSIKLDLPPFTLIGATTRAGSLTSPLRDRFGIVQRLEFYSIEDLTSIVMRSAACLNLEISDDASHEVARRSRGTPRIANRLLRRVRDYADVKNNGMITQGIAKAALAMLDIDQAGFDYLDRKLLSSIIERFDGGPVGLDNLAAAIGEERDTIEDVLEPYLIQQGFLQRTPRGRIATSQTYRHFGLAKLADK</sequence>
<evidence type="ECO:0000255" key="1">
    <source>
        <dbReference type="HAMAP-Rule" id="MF_00016"/>
    </source>
</evidence>
<organism>
    <name type="scientific">Actinobacillus succinogenes (strain ATCC 55618 / DSM 22257 / CCUG 43843 / 130Z)</name>
    <dbReference type="NCBI Taxonomy" id="339671"/>
    <lineage>
        <taxon>Bacteria</taxon>
        <taxon>Pseudomonadati</taxon>
        <taxon>Pseudomonadota</taxon>
        <taxon>Gammaproteobacteria</taxon>
        <taxon>Pasteurellales</taxon>
        <taxon>Pasteurellaceae</taxon>
        <taxon>Actinobacillus</taxon>
    </lineage>
</organism>
<comment type="function">
    <text evidence="1">The RuvA-RuvB-RuvC complex processes Holliday junction (HJ) DNA during genetic recombination and DNA repair, while the RuvA-RuvB complex plays an important role in the rescue of blocked DNA replication forks via replication fork reversal (RFR). RuvA specifically binds to HJ cruciform DNA, conferring on it an open structure. The RuvB hexamer acts as an ATP-dependent pump, pulling dsDNA into and through the RuvAB complex. RuvB forms 2 homohexamers on either side of HJ DNA bound by 1 or 2 RuvA tetramers; 4 subunits per hexamer contact DNA at a time. Coordinated motions by a converter formed by DNA-disengaged RuvB subunits stimulates ATP hydrolysis and nucleotide exchange. Immobilization of the converter enables RuvB to convert the ATP-contained energy into a lever motion, pulling 2 nucleotides of DNA out of the RuvA tetramer per ATP hydrolyzed, thus driving DNA branch migration. The RuvB motors rotate together with the DNA substrate, which together with the progressing nucleotide cycle form the mechanistic basis for DNA recombination by continuous HJ branch migration. Branch migration allows RuvC to scan DNA until it finds its consensus sequence, where it cleaves and resolves cruciform DNA.</text>
</comment>
<comment type="catalytic activity">
    <reaction evidence="1">
        <text>ATP + H2O = ADP + phosphate + H(+)</text>
        <dbReference type="Rhea" id="RHEA:13065"/>
        <dbReference type="ChEBI" id="CHEBI:15377"/>
        <dbReference type="ChEBI" id="CHEBI:15378"/>
        <dbReference type="ChEBI" id="CHEBI:30616"/>
        <dbReference type="ChEBI" id="CHEBI:43474"/>
        <dbReference type="ChEBI" id="CHEBI:456216"/>
    </reaction>
</comment>
<comment type="subunit">
    <text evidence="1">Homohexamer. Forms an RuvA(8)-RuvB(12)-Holliday junction (HJ) complex. HJ DNA is sandwiched between 2 RuvA tetramers; dsDNA enters through RuvA and exits via RuvB. An RuvB hexamer assembles on each DNA strand where it exits the tetramer. Each RuvB hexamer is contacted by two RuvA subunits (via domain III) on 2 adjacent RuvB subunits; this complex drives branch migration. In the full resolvosome a probable DNA-RuvA(4)-RuvB(12)-RuvC(2) complex forms which resolves the HJ.</text>
</comment>
<comment type="subcellular location">
    <subcellularLocation>
        <location evidence="1">Cytoplasm</location>
    </subcellularLocation>
</comment>
<comment type="domain">
    <text evidence="1">Has 3 domains, the large (RuvB-L) and small ATPase (RuvB-S) domains and the C-terminal head (RuvB-H) domain. The head domain binds DNA, while the ATPase domains jointly bind ATP, ADP or are empty depending on the state of the subunit in the translocation cycle. During a single DNA translocation step the structure of each domain remains the same, but their relative positions change.</text>
</comment>
<comment type="similarity">
    <text evidence="1">Belongs to the RuvB family.</text>
</comment>
<gene>
    <name evidence="1" type="primary">ruvB</name>
    <name type="ordered locus">Asuc_1799</name>
</gene>
<feature type="chain" id="PRO_1000070968" description="Holliday junction branch migration complex subunit RuvB">
    <location>
        <begin position="1"/>
        <end position="336"/>
    </location>
</feature>
<feature type="region of interest" description="Large ATPase domain (RuvB-L)" evidence="1">
    <location>
        <begin position="4"/>
        <end position="184"/>
    </location>
</feature>
<feature type="region of interest" description="Small ATPAse domain (RuvB-S)" evidence="1">
    <location>
        <begin position="185"/>
        <end position="255"/>
    </location>
</feature>
<feature type="region of interest" description="Head domain (RuvB-H)" evidence="1">
    <location>
        <begin position="258"/>
        <end position="336"/>
    </location>
</feature>
<feature type="binding site" evidence="1">
    <location>
        <position position="23"/>
    </location>
    <ligand>
        <name>ATP</name>
        <dbReference type="ChEBI" id="CHEBI:30616"/>
    </ligand>
</feature>
<feature type="binding site" evidence="1">
    <location>
        <position position="24"/>
    </location>
    <ligand>
        <name>ATP</name>
        <dbReference type="ChEBI" id="CHEBI:30616"/>
    </ligand>
</feature>
<feature type="binding site" evidence="1">
    <location>
        <position position="65"/>
    </location>
    <ligand>
        <name>ATP</name>
        <dbReference type="ChEBI" id="CHEBI:30616"/>
    </ligand>
</feature>
<feature type="binding site" evidence="1">
    <location>
        <position position="68"/>
    </location>
    <ligand>
        <name>ATP</name>
        <dbReference type="ChEBI" id="CHEBI:30616"/>
    </ligand>
</feature>
<feature type="binding site" evidence="1">
    <location>
        <position position="69"/>
    </location>
    <ligand>
        <name>ATP</name>
        <dbReference type="ChEBI" id="CHEBI:30616"/>
    </ligand>
</feature>
<feature type="binding site" evidence="1">
    <location>
        <position position="69"/>
    </location>
    <ligand>
        <name>Mg(2+)</name>
        <dbReference type="ChEBI" id="CHEBI:18420"/>
    </ligand>
</feature>
<feature type="binding site" evidence="1">
    <location>
        <position position="70"/>
    </location>
    <ligand>
        <name>ATP</name>
        <dbReference type="ChEBI" id="CHEBI:30616"/>
    </ligand>
</feature>
<feature type="binding site" evidence="1">
    <location>
        <begin position="131"/>
        <end position="133"/>
    </location>
    <ligand>
        <name>ATP</name>
        <dbReference type="ChEBI" id="CHEBI:30616"/>
    </ligand>
</feature>
<feature type="binding site" evidence="1">
    <location>
        <position position="174"/>
    </location>
    <ligand>
        <name>ATP</name>
        <dbReference type="ChEBI" id="CHEBI:30616"/>
    </ligand>
</feature>
<feature type="binding site" evidence="1">
    <location>
        <position position="184"/>
    </location>
    <ligand>
        <name>ATP</name>
        <dbReference type="ChEBI" id="CHEBI:30616"/>
    </ligand>
</feature>
<feature type="binding site" evidence="1">
    <location>
        <position position="221"/>
    </location>
    <ligand>
        <name>ATP</name>
        <dbReference type="ChEBI" id="CHEBI:30616"/>
    </ligand>
</feature>
<feature type="binding site" evidence="1">
    <location>
        <position position="294"/>
    </location>
    <ligand>
        <name>DNA</name>
        <dbReference type="ChEBI" id="CHEBI:16991"/>
    </ligand>
</feature>
<feature type="binding site" evidence="1">
    <location>
        <position position="313"/>
    </location>
    <ligand>
        <name>DNA</name>
        <dbReference type="ChEBI" id="CHEBI:16991"/>
    </ligand>
</feature>
<feature type="binding site" evidence="1">
    <location>
        <position position="318"/>
    </location>
    <ligand>
        <name>DNA</name>
        <dbReference type="ChEBI" id="CHEBI:16991"/>
    </ligand>
</feature>
<protein>
    <recommendedName>
        <fullName evidence="1">Holliday junction branch migration complex subunit RuvB</fullName>
        <ecNumber evidence="1">3.6.4.-</ecNumber>
    </recommendedName>
</protein>
<reference key="1">
    <citation type="journal article" date="2010" name="BMC Genomics">
        <title>A genomic perspective on the potential of Actinobacillus succinogenes for industrial succinate production.</title>
        <authorList>
            <person name="McKinlay J.B."/>
            <person name="Laivenieks M."/>
            <person name="Schindler B.D."/>
            <person name="McKinlay A.A."/>
            <person name="Siddaramappa S."/>
            <person name="Challacombe J.F."/>
            <person name="Lowry S.R."/>
            <person name="Clum A."/>
            <person name="Lapidus A.L."/>
            <person name="Burkhart K.B."/>
            <person name="Harkins V."/>
            <person name="Vieille C."/>
        </authorList>
    </citation>
    <scope>NUCLEOTIDE SEQUENCE [LARGE SCALE GENOMIC DNA]</scope>
    <source>
        <strain>ATCC 55618 / DSM 22257 / CCUG 43843 / 130Z</strain>
    </source>
</reference>